<accession>O35011</accession>
<comment type="function">
    <text evidence="1 2">Promotes RNA polymerase assembly. Latches the N- and C-terminal regions of the beta' subunit thereby facilitating its interaction with the beta and alpha subunits (By similarity). In vitro reconstitution experiments this subunit is dispensible (PubMed:18289874).</text>
</comment>
<comment type="catalytic activity">
    <reaction>
        <text>RNA(n) + a ribonucleoside 5'-triphosphate = RNA(n+1) + diphosphate</text>
        <dbReference type="Rhea" id="RHEA:21248"/>
        <dbReference type="Rhea" id="RHEA-COMP:14527"/>
        <dbReference type="Rhea" id="RHEA-COMP:17342"/>
        <dbReference type="ChEBI" id="CHEBI:33019"/>
        <dbReference type="ChEBI" id="CHEBI:61557"/>
        <dbReference type="ChEBI" id="CHEBI:140395"/>
        <dbReference type="EC" id="2.7.7.6"/>
    </reaction>
</comment>
<comment type="subunit">
    <text evidence="2 3 4">RNAP is composed of a core of 2 alpha, a beta and a beta' subunit. The core is associated with a delta subunit, and at least one of epsilon or omega (PubMed:18289874, PubMed:21710567, PubMed:6802805). When a sigma factor is associated with the core the holoenzyme is formed, which can initiate transcription (PubMed:18289874).</text>
</comment>
<comment type="similarity">
    <text evidence="6">Belongs to the RNA polymerase subunit omega family.</text>
</comment>
<organism>
    <name type="scientific">Bacillus subtilis (strain 168)</name>
    <dbReference type="NCBI Taxonomy" id="224308"/>
    <lineage>
        <taxon>Bacteria</taxon>
        <taxon>Bacillati</taxon>
        <taxon>Bacillota</taxon>
        <taxon>Bacilli</taxon>
        <taxon>Bacillales</taxon>
        <taxon>Bacillaceae</taxon>
        <taxon>Bacillus</taxon>
    </lineage>
</organism>
<sequence>MLDPSIDSLMNKLDSKYTLVTVSARRAREMQIKKDQMIEHTISHKYVGKALEEIDAGLLSFEKEDRE</sequence>
<name>RPOZ_BACSU</name>
<evidence type="ECO:0000250" key="1"/>
<evidence type="ECO:0000269" key="2">
    <source>
    </source>
</evidence>
<evidence type="ECO:0000269" key="3">
    <source>
    </source>
</evidence>
<evidence type="ECO:0000269" key="4">
    <source>
    </source>
</evidence>
<evidence type="ECO:0000303" key="5">
    <source>
    </source>
</evidence>
<evidence type="ECO:0000305" key="6"/>
<evidence type="ECO:0007829" key="7">
    <source>
        <dbReference type="PDB" id="8XA7"/>
    </source>
</evidence>
<dbReference type="EC" id="2.7.7.6" evidence="4"/>
<dbReference type="EMBL" id="Y13937">
    <property type="protein sequence ID" value="CAA74272.1"/>
    <property type="molecule type" value="Genomic_DNA"/>
</dbReference>
<dbReference type="EMBL" id="AL009126">
    <property type="protein sequence ID" value="CAB13442.1"/>
    <property type="molecule type" value="Genomic_DNA"/>
</dbReference>
<dbReference type="PIR" id="C69878">
    <property type="entry name" value="C69878"/>
</dbReference>
<dbReference type="RefSeq" id="NP_389451.1">
    <property type="nucleotide sequence ID" value="NC_000964.3"/>
</dbReference>
<dbReference type="RefSeq" id="WP_003221520.1">
    <property type="nucleotide sequence ID" value="NZ_OZ025638.1"/>
</dbReference>
<dbReference type="PDB" id="6WVJ">
    <property type="method" value="EM"/>
    <property type="resolution" value="3.36 A"/>
    <property type="chains" value="F=1-67"/>
</dbReference>
<dbReference type="PDB" id="6WVK">
    <property type="method" value="EM"/>
    <property type="resolution" value="3.36 A"/>
    <property type="chains" value="F=1-67"/>
</dbReference>
<dbReference type="PDB" id="7CKQ">
    <property type="method" value="EM"/>
    <property type="resolution" value="4.40 A"/>
    <property type="chains" value="E=1-67"/>
</dbReference>
<dbReference type="PDB" id="7F75">
    <property type="method" value="EM"/>
    <property type="resolution" value="4.20 A"/>
    <property type="chains" value="E=1-67"/>
</dbReference>
<dbReference type="PDB" id="8XA6">
    <property type="method" value="EM"/>
    <property type="resolution" value="3.02 A"/>
    <property type="chains" value="F=1-67"/>
</dbReference>
<dbReference type="PDB" id="8XA7">
    <property type="method" value="EM"/>
    <property type="resolution" value="2.94 A"/>
    <property type="chains" value="F=1-67"/>
</dbReference>
<dbReference type="PDB" id="8XA8">
    <property type="method" value="EM"/>
    <property type="resolution" value="3.19 A"/>
    <property type="chains" value="F=1-67"/>
</dbReference>
<dbReference type="PDBsum" id="6WVJ"/>
<dbReference type="PDBsum" id="6WVK"/>
<dbReference type="PDBsum" id="7CKQ"/>
<dbReference type="PDBsum" id="7F75"/>
<dbReference type="PDBsum" id="8XA6"/>
<dbReference type="PDBsum" id="8XA7"/>
<dbReference type="PDBsum" id="8XA8"/>
<dbReference type="EMDB" id="EMD-21921"/>
<dbReference type="EMDB" id="EMD-30390"/>
<dbReference type="EMDB" id="EMD-31485"/>
<dbReference type="EMDB" id="EMD-38195"/>
<dbReference type="EMDB" id="EMD-38196"/>
<dbReference type="EMDB" id="EMD-38197"/>
<dbReference type="SMR" id="O35011"/>
<dbReference type="FunCoup" id="O35011">
    <property type="interactions" value="27"/>
</dbReference>
<dbReference type="STRING" id="224308.BSU15690"/>
<dbReference type="PaxDb" id="224308-BSU15690"/>
<dbReference type="EnsemblBacteria" id="CAB13442">
    <property type="protein sequence ID" value="CAB13442"/>
    <property type="gene ID" value="BSU_15690"/>
</dbReference>
<dbReference type="GeneID" id="86873922"/>
<dbReference type="GeneID" id="936419"/>
<dbReference type="KEGG" id="bsu:BSU15690"/>
<dbReference type="PATRIC" id="fig|224308.179.peg.1709"/>
<dbReference type="eggNOG" id="COG1758">
    <property type="taxonomic scope" value="Bacteria"/>
</dbReference>
<dbReference type="InParanoid" id="O35011"/>
<dbReference type="OrthoDB" id="9815459at2"/>
<dbReference type="PhylomeDB" id="O35011"/>
<dbReference type="BioCyc" id="BSUB:BSU15690-MONOMER"/>
<dbReference type="PRO" id="PR:O35011"/>
<dbReference type="Proteomes" id="UP000001570">
    <property type="component" value="Chromosome"/>
</dbReference>
<dbReference type="GO" id="GO:0000345">
    <property type="term" value="C:cytosolic DNA-directed RNA polymerase complex"/>
    <property type="evidence" value="ECO:0000318"/>
    <property type="project" value="GO_Central"/>
</dbReference>
<dbReference type="GO" id="GO:0001000">
    <property type="term" value="F:bacterial-type RNA polymerase core enzyme binding"/>
    <property type="evidence" value="ECO:0000318"/>
    <property type="project" value="GO_Central"/>
</dbReference>
<dbReference type="GO" id="GO:0003677">
    <property type="term" value="F:DNA binding"/>
    <property type="evidence" value="ECO:0007669"/>
    <property type="project" value="UniProtKB-UniRule"/>
</dbReference>
<dbReference type="GO" id="GO:0003899">
    <property type="term" value="F:DNA-directed RNA polymerase activity"/>
    <property type="evidence" value="ECO:0007669"/>
    <property type="project" value="UniProtKB-UniRule"/>
</dbReference>
<dbReference type="GO" id="GO:0006352">
    <property type="term" value="P:DNA-templated transcription initiation"/>
    <property type="evidence" value="ECO:0000318"/>
    <property type="project" value="GO_Central"/>
</dbReference>
<dbReference type="Gene3D" id="3.90.940.10">
    <property type="match status" value="1"/>
</dbReference>
<dbReference type="HAMAP" id="MF_00366">
    <property type="entry name" value="RNApol_bact_RpoZ"/>
    <property type="match status" value="1"/>
</dbReference>
<dbReference type="InterPro" id="IPR003716">
    <property type="entry name" value="DNA-dir_RNA_pol_omega"/>
</dbReference>
<dbReference type="InterPro" id="IPR006110">
    <property type="entry name" value="Pol_omega/Rpo6/RPB6"/>
</dbReference>
<dbReference type="InterPro" id="IPR036161">
    <property type="entry name" value="RPB6/omega-like_sf"/>
</dbReference>
<dbReference type="NCBIfam" id="TIGR00690">
    <property type="entry name" value="rpoZ"/>
    <property type="match status" value="1"/>
</dbReference>
<dbReference type="PANTHER" id="PTHR34476">
    <property type="entry name" value="DNA-DIRECTED RNA POLYMERASE SUBUNIT OMEGA"/>
    <property type="match status" value="1"/>
</dbReference>
<dbReference type="PANTHER" id="PTHR34476:SF1">
    <property type="entry name" value="DNA-DIRECTED RNA POLYMERASE SUBUNIT OMEGA"/>
    <property type="match status" value="1"/>
</dbReference>
<dbReference type="Pfam" id="PF01192">
    <property type="entry name" value="RNA_pol_Rpb6"/>
    <property type="match status" value="1"/>
</dbReference>
<dbReference type="SMART" id="SM01409">
    <property type="entry name" value="RNA_pol_Rpb6"/>
    <property type="match status" value="1"/>
</dbReference>
<dbReference type="SUPFAM" id="SSF63562">
    <property type="entry name" value="RPB6/omega subunit-like"/>
    <property type="match status" value="1"/>
</dbReference>
<gene>
    <name type="primary">rpoZ</name>
    <name type="synonym">yloH</name>
    <name type="ordered locus">BSU15690</name>
</gene>
<keyword id="KW-0002">3D-structure</keyword>
<keyword id="KW-0240">DNA-directed RNA polymerase</keyword>
<keyword id="KW-0548">Nucleotidyltransferase</keyword>
<keyword id="KW-1185">Reference proteome</keyword>
<keyword id="KW-0804">Transcription</keyword>
<keyword id="KW-0808">Transferase</keyword>
<proteinExistence type="evidence at protein level"/>
<feature type="chain" id="PRO_0000128916" description="DNA-directed RNA polymerase subunit omega">
    <location>
        <begin position="1"/>
        <end position="67"/>
    </location>
</feature>
<feature type="helix" evidence="7">
    <location>
        <begin position="6"/>
        <end position="10"/>
    </location>
</feature>
<feature type="helix" evidence="7">
    <location>
        <begin position="16"/>
        <end position="33"/>
    </location>
</feature>
<feature type="strand" evidence="7">
    <location>
        <begin position="37"/>
        <end position="40"/>
    </location>
</feature>
<feature type="helix" evidence="7">
    <location>
        <begin position="46"/>
        <end position="56"/>
    </location>
</feature>
<reference key="1">
    <citation type="journal article" date="1998" name="Microbiology">
        <title>A 28 kbp segment from the spoVM region of the Bacillus subtilis 168 genome.</title>
        <authorList>
            <person name="Foulger D."/>
            <person name="Errington J."/>
        </authorList>
    </citation>
    <scope>NUCLEOTIDE SEQUENCE [GENOMIC DNA]</scope>
    <source>
        <strain>168</strain>
    </source>
</reference>
<reference key="2">
    <citation type="journal article" date="1997" name="Nature">
        <title>The complete genome sequence of the Gram-positive bacterium Bacillus subtilis.</title>
        <authorList>
            <person name="Kunst F."/>
            <person name="Ogasawara N."/>
            <person name="Moszer I."/>
            <person name="Albertini A.M."/>
            <person name="Alloni G."/>
            <person name="Azevedo V."/>
            <person name="Bertero M.G."/>
            <person name="Bessieres P."/>
            <person name="Bolotin A."/>
            <person name="Borchert S."/>
            <person name="Borriss R."/>
            <person name="Boursier L."/>
            <person name="Brans A."/>
            <person name="Braun M."/>
            <person name="Brignell S.C."/>
            <person name="Bron S."/>
            <person name="Brouillet S."/>
            <person name="Bruschi C.V."/>
            <person name="Caldwell B."/>
            <person name="Capuano V."/>
            <person name="Carter N.M."/>
            <person name="Choi S.-K."/>
            <person name="Codani J.-J."/>
            <person name="Connerton I.F."/>
            <person name="Cummings N.J."/>
            <person name="Daniel R.A."/>
            <person name="Denizot F."/>
            <person name="Devine K.M."/>
            <person name="Duesterhoeft A."/>
            <person name="Ehrlich S.D."/>
            <person name="Emmerson P.T."/>
            <person name="Entian K.-D."/>
            <person name="Errington J."/>
            <person name="Fabret C."/>
            <person name="Ferrari E."/>
            <person name="Foulger D."/>
            <person name="Fritz C."/>
            <person name="Fujita M."/>
            <person name="Fujita Y."/>
            <person name="Fuma S."/>
            <person name="Galizzi A."/>
            <person name="Galleron N."/>
            <person name="Ghim S.-Y."/>
            <person name="Glaser P."/>
            <person name="Goffeau A."/>
            <person name="Golightly E.J."/>
            <person name="Grandi G."/>
            <person name="Guiseppi G."/>
            <person name="Guy B.J."/>
            <person name="Haga K."/>
            <person name="Haiech J."/>
            <person name="Harwood C.R."/>
            <person name="Henaut A."/>
            <person name="Hilbert H."/>
            <person name="Holsappel S."/>
            <person name="Hosono S."/>
            <person name="Hullo M.-F."/>
            <person name="Itaya M."/>
            <person name="Jones L.-M."/>
            <person name="Joris B."/>
            <person name="Karamata D."/>
            <person name="Kasahara Y."/>
            <person name="Klaerr-Blanchard M."/>
            <person name="Klein C."/>
            <person name="Kobayashi Y."/>
            <person name="Koetter P."/>
            <person name="Koningstein G."/>
            <person name="Krogh S."/>
            <person name="Kumano M."/>
            <person name="Kurita K."/>
            <person name="Lapidus A."/>
            <person name="Lardinois S."/>
            <person name="Lauber J."/>
            <person name="Lazarevic V."/>
            <person name="Lee S.-M."/>
            <person name="Levine A."/>
            <person name="Liu H."/>
            <person name="Masuda S."/>
            <person name="Mauel C."/>
            <person name="Medigue C."/>
            <person name="Medina N."/>
            <person name="Mellado R.P."/>
            <person name="Mizuno M."/>
            <person name="Moestl D."/>
            <person name="Nakai S."/>
            <person name="Noback M."/>
            <person name="Noone D."/>
            <person name="O'Reilly M."/>
            <person name="Ogawa K."/>
            <person name="Ogiwara A."/>
            <person name="Oudega B."/>
            <person name="Park S.-H."/>
            <person name="Parro V."/>
            <person name="Pohl T.M."/>
            <person name="Portetelle D."/>
            <person name="Porwollik S."/>
            <person name="Prescott A.M."/>
            <person name="Presecan E."/>
            <person name="Pujic P."/>
            <person name="Purnelle B."/>
            <person name="Rapoport G."/>
            <person name="Rey M."/>
            <person name="Reynolds S."/>
            <person name="Rieger M."/>
            <person name="Rivolta C."/>
            <person name="Rocha E."/>
            <person name="Roche B."/>
            <person name="Rose M."/>
            <person name="Sadaie Y."/>
            <person name="Sato T."/>
            <person name="Scanlan E."/>
            <person name="Schleich S."/>
            <person name="Schroeter R."/>
            <person name="Scoffone F."/>
            <person name="Sekiguchi J."/>
            <person name="Sekowska A."/>
            <person name="Seror S.J."/>
            <person name="Serror P."/>
            <person name="Shin B.-S."/>
            <person name="Soldo B."/>
            <person name="Sorokin A."/>
            <person name="Tacconi E."/>
            <person name="Takagi T."/>
            <person name="Takahashi H."/>
            <person name="Takemaru K."/>
            <person name="Takeuchi M."/>
            <person name="Tamakoshi A."/>
            <person name="Tanaka T."/>
            <person name="Terpstra P."/>
            <person name="Tognoni A."/>
            <person name="Tosato V."/>
            <person name="Uchiyama S."/>
            <person name="Vandenbol M."/>
            <person name="Vannier F."/>
            <person name="Vassarotti A."/>
            <person name="Viari A."/>
            <person name="Wambutt R."/>
            <person name="Wedler E."/>
            <person name="Wedler H."/>
            <person name="Weitzenegger T."/>
            <person name="Winters P."/>
            <person name="Wipat A."/>
            <person name="Yamamoto H."/>
            <person name="Yamane K."/>
            <person name="Yasumoto K."/>
            <person name="Yata K."/>
            <person name="Yoshida K."/>
            <person name="Yoshikawa H.-F."/>
            <person name="Zumstein E."/>
            <person name="Yoshikawa H."/>
            <person name="Danchin A."/>
        </authorList>
    </citation>
    <scope>NUCLEOTIDE SEQUENCE [LARGE SCALE GENOMIC DNA]</scope>
    <source>
        <strain>168</strain>
    </source>
</reference>
<reference key="3">
    <citation type="journal article" date="1982" name="J. Bacteriol.">
        <title>Interchangeability of delta subunits of RNA polymerase from different species of the genus Bacillus.</title>
        <authorList>
            <person name="Achberger E.C."/>
            <person name="Tahara M."/>
            <person name="Whiteley H.R."/>
        </authorList>
    </citation>
    <scope>SUBUNIT</scope>
    <source>
        <strain>168</strain>
    </source>
</reference>
<reference key="4">
    <citation type="journal article" date="2008" name="Protein Expr. Purif.">
        <title>Overproduction and purification of recombinant Bacillus subtilis RNA polymerase.</title>
        <authorList>
            <person name="Yang X."/>
            <person name="Lewis P.J."/>
        </authorList>
    </citation>
    <scope>FUNCTION</scope>
    <scope>SUBUNIT</scope>
    <source>
        <strain>BS200</strain>
    </source>
</reference>
<reference key="5">
    <citation type="journal article" date="2011" name="Proteomics">
        <title>The dynamic protein partnership of RNA polymerase in Bacillus subtilis.</title>
        <authorList>
            <person name="Delumeau O."/>
            <person name="Lecointe F."/>
            <person name="Muntel J."/>
            <person name="Guillot A."/>
            <person name="Guedon E."/>
            <person name="Monnet V."/>
            <person name="Hecker M."/>
            <person name="Becher D."/>
            <person name="Polard P."/>
            <person name="Noirot P."/>
        </authorList>
    </citation>
    <scope>SUBUNIT</scope>
    <source>
        <strain>168</strain>
    </source>
</reference>
<protein>
    <recommendedName>
        <fullName evidence="5">DNA-directed RNA polymerase subunit omega</fullName>
        <shortName>RNAP omega subunit</shortName>
        <ecNumber evidence="4">2.7.7.6</ecNumber>
    </recommendedName>
    <alternativeName>
        <fullName evidence="5">RNA polymerase omega 2 subunit</fullName>
    </alternativeName>
    <alternativeName>
        <fullName>Transcriptase subunit omega</fullName>
    </alternativeName>
</protein>